<reference key="1">
    <citation type="journal article" date="1998" name="DNA Res.">
        <title>Structural analysis of Arabidopsis thaliana chromosome 5. VI. Sequence features of the regions of 1,367,185 bp covered by 19 physically assigned P1 and TAC clones.</title>
        <authorList>
            <person name="Kotani H."/>
            <person name="Nakamura Y."/>
            <person name="Sato S."/>
            <person name="Asamizu E."/>
            <person name="Kaneko T."/>
            <person name="Miyajima N."/>
            <person name="Tabata S."/>
        </authorList>
    </citation>
    <scope>NUCLEOTIDE SEQUENCE [LARGE SCALE GENOMIC DNA]</scope>
    <source>
        <strain>cv. Columbia</strain>
    </source>
</reference>
<reference key="2">
    <citation type="journal article" date="2017" name="Plant J.">
        <title>Araport11: a complete reannotation of the Arabidopsis thaliana reference genome.</title>
        <authorList>
            <person name="Cheng C.Y."/>
            <person name="Krishnakumar V."/>
            <person name="Chan A.P."/>
            <person name="Thibaud-Nissen F."/>
            <person name="Schobel S."/>
            <person name="Town C.D."/>
        </authorList>
    </citation>
    <scope>GENOME REANNOTATION</scope>
    <source>
        <strain>cv. Columbia</strain>
    </source>
</reference>
<reference key="3">
    <citation type="journal article" date="2003" name="Science">
        <title>Empirical analysis of transcriptional activity in the Arabidopsis genome.</title>
        <authorList>
            <person name="Yamada K."/>
            <person name="Lim J."/>
            <person name="Dale J.M."/>
            <person name="Chen H."/>
            <person name="Shinn P."/>
            <person name="Palm C.J."/>
            <person name="Southwick A.M."/>
            <person name="Wu H.C."/>
            <person name="Kim C.J."/>
            <person name="Nguyen M."/>
            <person name="Pham P.K."/>
            <person name="Cheuk R.F."/>
            <person name="Karlin-Newmann G."/>
            <person name="Liu S.X."/>
            <person name="Lam B."/>
            <person name="Sakano H."/>
            <person name="Wu T."/>
            <person name="Yu G."/>
            <person name="Miranda M."/>
            <person name="Quach H.L."/>
            <person name="Tripp M."/>
            <person name="Chang C.H."/>
            <person name="Lee J.M."/>
            <person name="Toriumi M.J."/>
            <person name="Chan M.M."/>
            <person name="Tang C.C."/>
            <person name="Onodera C.S."/>
            <person name="Deng J.M."/>
            <person name="Akiyama K."/>
            <person name="Ansari Y."/>
            <person name="Arakawa T."/>
            <person name="Banh J."/>
            <person name="Banno F."/>
            <person name="Bowser L."/>
            <person name="Brooks S.Y."/>
            <person name="Carninci P."/>
            <person name="Chao Q."/>
            <person name="Choy N."/>
            <person name="Enju A."/>
            <person name="Goldsmith A.D."/>
            <person name="Gurjal M."/>
            <person name="Hansen N.F."/>
            <person name="Hayashizaki Y."/>
            <person name="Johnson-Hopson C."/>
            <person name="Hsuan V.W."/>
            <person name="Iida K."/>
            <person name="Karnes M."/>
            <person name="Khan S."/>
            <person name="Koesema E."/>
            <person name="Ishida J."/>
            <person name="Jiang P.X."/>
            <person name="Jones T."/>
            <person name="Kawai J."/>
            <person name="Kamiya A."/>
            <person name="Meyers C."/>
            <person name="Nakajima M."/>
            <person name="Narusaka M."/>
            <person name="Seki M."/>
            <person name="Sakurai T."/>
            <person name="Satou M."/>
            <person name="Tamse R."/>
            <person name="Vaysberg M."/>
            <person name="Wallender E.K."/>
            <person name="Wong C."/>
            <person name="Yamamura Y."/>
            <person name="Yuan S."/>
            <person name="Shinozaki K."/>
            <person name="Davis R.W."/>
            <person name="Theologis A."/>
            <person name="Ecker J.R."/>
        </authorList>
    </citation>
    <scope>NUCLEOTIDE SEQUENCE [LARGE SCALE MRNA]</scope>
    <source>
        <strain>cv. Columbia</strain>
    </source>
</reference>
<accession>Q9FK28</accession>
<sequence length="219" mass="25105">MASGTVGGLSEVYSSAKRILLRARNGIEKLERFDSDPTDLASSVKRDITEVQSLCSNMDGLWRSIPVKSQRDLWRRKSEQVGEEAEYLNQSLEKYMWRNQRKMLEAKERADLLGRGSGEGAHILQIFDEEAQGMNSVKNSKRMLEDSFQSGVAILSKYAEQRDRLKSAQRKALDVLNTVGLSNSVLRLIERRNRVDTWIKYAGMIATLVILYLFIRWTR</sequence>
<proteinExistence type="evidence at transcript level"/>
<gene>
    <name type="primary">MEMB12</name>
    <name type="ordered locus">At5g50440</name>
    <name type="ORF">MXI22.16</name>
</gene>
<feature type="initiator methionine" description="Removed" evidence="2">
    <location>
        <position position="1"/>
    </location>
</feature>
<feature type="chain" id="PRO_0000212555" description="Membrin-12">
    <location>
        <begin position="2"/>
        <end position="219"/>
    </location>
</feature>
<feature type="topological domain" description="Cytoplasmic" evidence="3">
    <location>
        <begin position="2"/>
        <end position="197"/>
    </location>
</feature>
<feature type="transmembrane region" description="Helical; Anchor for type IV membrane protein" evidence="3">
    <location>
        <begin position="198"/>
        <end position="215"/>
    </location>
</feature>
<feature type="topological domain" description="Vesicular" evidence="3">
    <location>
        <begin position="216"/>
        <end position="219"/>
    </location>
</feature>
<feature type="modified residue" description="N-acetylalanine" evidence="2">
    <location>
        <position position="2"/>
    </location>
</feature>
<protein>
    <recommendedName>
        <fullName>Membrin-12</fullName>
        <shortName>AtMEMB12</shortName>
    </recommendedName>
    <alternativeName>
        <fullName>Golgi SNAP receptor complex member 2-2</fullName>
    </alternativeName>
</protein>
<comment type="function">
    <text evidence="1">Involved in transport of proteins from the cis/medial-Golgi to the trans-Golgi network.</text>
</comment>
<comment type="subcellular location">
    <subcellularLocation>
        <location evidence="4">Golgi apparatus membrane</location>
        <topology evidence="4">Single-pass type IV membrane protein</topology>
    </subcellularLocation>
</comment>
<comment type="similarity">
    <text evidence="4">Belongs to the GOSR2 family.</text>
</comment>
<keyword id="KW-0007">Acetylation</keyword>
<keyword id="KW-0333">Golgi apparatus</keyword>
<keyword id="KW-0472">Membrane</keyword>
<keyword id="KW-0653">Protein transport</keyword>
<keyword id="KW-1185">Reference proteome</keyword>
<keyword id="KW-0812">Transmembrane</keyword>
<keyword id="KW-1133">Transmembrane helix</keyword>
<keyword id="KW-0813">Transport</keyword>
<dbReference type="EMBL" id="AB012248">
    <property type="protein sequence ID" value="BAB09463.1"/>
    <property type="molecule type" value="Genomic_DNA"/>
</dbReference>
<dbReference type="EMBL" id="CP002688">
    <property type="protein sequence ID" value="AED95946.1"/>
    <property type="molecule type" value="Genomic_DNA"/>
</dbReference>
<dbReference type="EMBL" id="CP002688">
    <property type="protein sequence ID" value="ANM68268.1"/>
    <property type="molecule type" value="Genomic_DNA"/>
</dbReference>
<dbReference type="EMBL" id="BT004999">
    <property type="protein sequence ID" value="AAO50532.1"/>
    <property type="molecule type" value="mRNA"/>
</dbReference>
<dbReference type="RefSeq" id="NP_001330036.1">
    <property type="nucleotide sequence ID" value="NM_001344893.1"/>
</dbReference>
<dbReference type="RefSeq" id="NP_199855.1">
    <property type="nucleotide sequence ID" value="NM_124426.5"/>
</dbReference>
<dbReference type="SMR" id="Q9FK28"/>
<dbReference type="BioGRID" id="20358">
    <property type="interactions" value="24"/>
</dbReference>
<dbReference type="FunCoup" id="Q9FK28">
    <property type="interactions" value="3947"/>
</dbReference>
<dbReference type="IntAct" id="Q9FK28">
    <property type="interactions" value="24"/>
</dbReference>
<dbReference type="STRING" id="3702.Q9FK28"/>
<dbReference type="iPTMnet" id="Q9FK28"/>
<dbReference type="PaxDb" id="3702-AT5G50440.1"/>
<dbReference type="ProteomicsDB" id="228860"/>
<dbReference type="EnsemblPlants" id="AT5G50440.1">
    <property type="protein sequence ID" value="AT5G50440.1"/>
    <property type="gene ID" value="AT5G50440"/>
</dbReference>
<dbReference type="EnsemblPlants" id="AT5G50440.2">
    <property type="protein sequence ID" value="AT5G50440.2"/>
    <property type="gene ID" value="AT5G50440"/>
</dbReference>
<dbReference type="GeneID" id="835112"/>
<dbReference type="Gramene" id="AT5G50440.1">
    <property type="protein sequence ID" value="AT5G50440.1"/>
    <property type="gene ID" value="AT5G50440"/>
</dbReference>
<dbReference type="Gramene" id="AT5G50440.2">
    <property type="protein sequence ID" value="AT5G50440.2"/>
    <property type="gene ID" value="AT5G50440"/>
</dbReference>
<dbReference type="KEGG" id="ath:AT5G50440"/>
<dbReference type="Araport" id="AT5G50440"/>
<dbReference type="TAIR" id="AT5G50440">
    <property type="gene designation" value="MEMB12"/>
</dbReference>
<dbReference type="eggNOG" id="KOG3251">
    <property type="taxonomic scope" value="Eukaryota"/>
</dbReference>
<dbReference type="HOGENOM" id="CLU_083740_1_0_1"/>
<dbReference type="InParanoid" id="Q9FK28"/>
<dbReference type="OMA" id="KQIDGNC"/>
<dbReference type="PhylomeDB" id="Q9FK28"/>
<dbReference type="PRO" id="PR:Q9FK28"/>
<dbReference type="Proteomes" id="UP000006548">
    <property type="component" value="Chromosome 5"/>
</dbReference>
<dbReference type="ExpressionAtlas" id="Q9FK28">
    <property type="expression patterns" value="baseline and differential"/>
</dbReference>
<dbReference type="GO" id="GO:0005801">
    <property type="term" value="C:cis-Golgi network"/>
    <property type="evidence" value="ECO:0000314"/>
    <property type="project" value="TAIR"/>
</dbReference>
<dbReference type="GO" id="GO:0000139">
    <property type="term" value="C:Golgi membrane"/>
    <property type="evidence" value="ECO:0007669"/>
    <property type="project" value="UniProtKB-SubCell"/>
</dbReference>
<dbReference type="GO" id="GO:0005484">
    <property type="term" value="F:SNAP receptor activity"/>
    <property type="evidence" value="ECO:0007669"/>
    <property type="project" value="InterPro"/>
</dbReference>
<dbReference type="GO" id="GO:0015031">
    <property type="term" value="P:protein transport"/>
    <property type="evidence" value="ECO:0007669"/>
    <property type="project" value="UniProtKB-KW"/>
</dbReference>
<dbReference type="GO" id="GO:0045088">
    <property type="term" value="P:regulation of innate immune response"/>
    <property type="evidence" value="ECO:0000315"/>
    <property type="project" value="TAIR"/>
</dbReference>
<dbReference type="GO" id="GO:0050708">
    <property type="term" value="P:regulation of protein secretion"/>
    <property type="evidence" value="ECO:0000315"/>
    <property type="project" value="TAIR"/>
</dbReference>
<dbReference type="GO" id="GO:0016192">
    <property type="term" value="P:vesicle-mediated transport"/>
    <property type="evidence" value="ECO:0007669"/>
    <property type="project" value="InterPro"/>
</dbReference>
<dbReference type="CDD" id="cd15863">
    <property type="entry name" value="SNARE_GS27"/>
    <property type="match status" value="1"/>
</dbReference>
<dbReference type="Gene3D" id="1.20.5.110">
    <property type="match status" value="1"/>
</dbReference>
<dbReference type="InterPro" id="IPR027027">
    <property type="entry name" value="GOSR2/Membrin/Bos1"/>
</dbReference>
<dbReference type="PANTHER" id="PTHR21230:SF1">
    <property type="entry name" value="GOLGI SNAP RECEPTOR COMPLEX MEMBER 2"/>
    <property type="match status" value="1"/>
</dbReference>
<dbReference type="PANTHER" id="PTHR21230">
    <property type="entry name" value="VESICLE TRANSPORT V-SNARE PROTEIN VTI1-RELATED"/>
    <property type="match status" value="1"/>
</dbReference>
<dbReference type="Pfam" id="PF12352">
    <property type="entry name" value="V-SNARE_C"/>
    <property type="match status" value="1"/>
</dbReference>
<dbReference type="PIRSF" id="PIRSF028865">
    <property type="entry name" value="Membrin-2"/>
    <property type="match status" value="1"/>
</dbReference>
<dbReference type="SUPFAM" id="SSF58038">
    <property type="entry name" value="SNARE fusion complex"/>
    <property type="match status" value="1"/>
</dbReference>
<evidence type="ECO:0000250" key="1"/>
<evidence type="ECO:0000250" key="2">
    <source>
        <dbReference type="UniProtKB" id="Q9SJL6"/>
    </source>
</evidence>
<evidence type="ECO:0000255" key="3"/>
<evidence type="ECO:0000305" key="4"/>
<organism>
    <name type="scientific">Arabidopsis thaliana</name>
    <name type="common">Mouse-ear cress</name>
    <dbReference type="NCBI Taxonomy" id="3702"/>
    <lineage>
        <taxon>Eukaryota</taxon>
        <taxon>Viridiplantae</taxon>
        <taxon>Streptophyta</taxon>
        <taxon>Embryophyta</taxon>
        <taxon>Tracheophyta</taxon>
        <taxon>Spermatophyta</taxon>
        <taxon>Magnoliopsida</taxon>
        <taxon>eudicotyledons</taxon>
        <taxon>Gunneridae</taxon>
        <taxon>Pentapetalae</taxon>
        <taxon>rosids</taxon>
        <taxon>malvids</taxon>
        <taxon>Brassicales</taxon>
        <taxon>Brassicaceae</taxon>
        <taxon>Camelineae</taxon>
        <taxon>Arabidopsis</taxon>
    </lineage>
</organism>
<name>MEM12_ARATH</name>